<protein>
    <recommendedName>
        <fullName evidence="1">Large ribosomal subunit protein uL3</fullName>
    </recommendedName>
    <alternativeName>
        <fullName evidence="3">50S ribosomal protein L3</fullName>
    </alternativeName>
</protein>
<dbReference type="EMBL" id="CP000378">
    <property type="protein sequence ID" value="ABF77657.1"/>
    <property type="molecule type" value="Genomic_DNA"/>
</dbReference>
<dbReference type="SMR" id="Q1BRU8"/>
<dbReference type="HOGENOM" id="CLU_044142_4_1_4"/>
<dbReference type="GO" id="GO:0022625">
    <property type="term" value="C:cytosolic large ribosomal subunit"/>
    <property type="evidence" value="ECO:0007669"/>
    <property type="project" value="TreeGrafter"/>
</dbReference>
<dbReference type="GO" id="GO:0019843">
    <property type="term" value="F:rRNA binding"/>
    <property type="evidence" value="ECO:0007669"/>
    <property type="project" value="UniProtKB-UniRule"/>
</dbReference>
<dbReference type="GO" id="GO:0003735">
    <property type="term" value="F:structural constituent of ribosome"/>
    <property type="evidence" value="ECO:0007669"/>
    <property type="project" value="InterPro"/>
</dbReference>
<dbReference type="GO" id="GO:0006412">
    <property type="term" value="P:translation"/>
    <property type="evidence" value="ECO:0007669"/>
    <property type="project" value="UniProtKB-UniRule"/>
</dbReference>
<dbReference type="FunFam" id="2.40.30.10:FF:000004">
    <property type="entry name" value="50S ribosomal protein L3"/>
    <property type="match status" value="1"/>
</dbReference>
<dbReference type="FunFam" id="3.30.160.810:FF:000001">
    <property type="entry name" value="50S ribosomal protein L3"/>
    <property type="match status" value="1"/>
</dbReference>
<dbReference type="Gene3D" id="3.30.160.810">
    <property type="match status" value="1"/>
</dbReference>
<dbReference type="Gene3D" id="2.40.30.10">
    <property type="entry name" value="Translation factors"/>
    <property type="match status" value="1"/>
</dbReference>
<dbReference type="HAMAP" id="MF_01325_B">
    <property type="entry name" value="Ribosomal_uL3_B"/>
    <property type="match status" value="1"/>
</dbReference>
<dbReference type="InterPro" id="IPR000597">
    <property type="entry name" value="Ribosomal_uL3"/>
</dbReference>
<dbReference type="InterPro" id="IPR019927">
    <property type="entry name" value="Ribosomal_uL3_bac/org-type"/>
</dbReference>
<dbReference type="InterPro" id="IPR019926">
    <property type="entry name" value="Ribosomal_uL3_CS"/>
</dbReference>
<dbReference type="InterPro" id="IPR009000">
    <property type="entry name" value="Transl_B-barrel_sf"/>
</dbReference>
<dbReference type="NCBIfam" id="TIGR03625">
    <property type="entry name" value="L3_bact"/>
    <property type="match status" value="1"/>
</dbReference>
<dbReference type="PANTHER" id="PTHR11229">
    <property type="entry name" value="50S RIBOSOMAL PROTEIN L3"/>
    <property type="match status" value="1"/>
</dbReference>
<dbReference type="PANTHER" id="PTHR11229:SF16">
    <property type="entry name" value="LARGE RIBOSOMAL SUBUNIT PROTEIN UL3C"/>
    <property type="match status" value="1"/>
</dbReference>
<dbReference type="Pfam" id="PF00297">
    <property type="entry name" value="Ribosomal_L3"/>
    <property type="match status" value="1"/>
</dbReference>
<dbReference type="SUPFAM" id="SSF50447">
    <property type="entry name" value="Translation proteins"/>
    <property type="match status" value="1"/>
</dbReference>
<dbReference type="PROSITE" id="PS00474">
    <property type="entry name" value="RIBOSOMAL_L3"/>
    <property type="match status" value="1"/>
</dbReference>
<comment type="function">
    <text evidence="1">One of the primary rRNA binding proteins, it binds directly near the 3'-end of the 23S rRNA, where it nucleates assembly of the 50S subunit.</text>
</comment>
<comment type="subunit">
    <text evidence="1">Part of the 50S ribosomal subunit. Forms a cluster with proteins L14 and L19.</text>
</comment>
<comment type="PTM">
    <text evidence="1">Methylated by PrmB.</text>
</comment>
<comment type="similarity">
    <text evidence="1">Belongs to the universal ribosomal protein uL3 family.</text>
</comment>
<proteinExistence type="inferred from homology"/>
<feature type="chain" id="PRO_1000052019" description="Large ribosomal subunit protein uL3">
    <location>
        <begin position="1"/>
        <end position="217"/>
    </location>
</feature>
<feature type="region of interest" description="Disordered" evidence="2">
    <location>
        <begin position="134"/>
        <end position="154"/>
    </location>
</feature>
<feature type="compositionally biased region" description="Polar residues" evidence="2">
    <location>
        <begin position="134"/>
        <end position="146"/>
    </location>
</feature>
<feature type="modified residue" description="N5-methylglutamine" evidence="1">
    <location>
        <position position="154"/>
    </location>
</feature>
<gene>
    <name evidence="1" type="primary">rplC</name>
    <name type="ordered locus">Bcen_2759</name>
</gene>
<reference key="1">
    <citation type="submission" date="2006-05" db="EMBL/GenBank/DDBJ databases">
        <title>Complete sequence of chromosome 1 of Burkholderia cenocepacia AU 1054.</title>
        <authorList>
            <consortium name="US DOE Joint Genome Institute"/>
            <person name="Copeland A."/>
            <person name="Lucas S."/>
            <person name="Lapidus A."/>
            <person name="Barry K."/>
            <person name="Detter J.C."/>
            <person name="Glavina del Rio T."/>
            <person name="Hammon N."/>
            <person name="Israni S."/>
            <person name="Dalin E."/>
            <person name="Tice H."/>
            <person name="Pitluck S."/>
            <person name="Chain P."/>
            <person name="Malfatti S."/>
            <person name="Shin M."/>
            <person name="Vergez L."/>
            <person name="Schmutz J."/>
            <person name="Larimer F."/>
            <person name="Land M."/>
            <person name="Hauser L."/>
            <person name="Kyrpides N."/>
            <person name="Lykidis A."/>
            <person name="LiPuma J.J."/>
            <person name="Konstantinidis K."/>
            <person name="Tiedje J.M."/>
            <person name="Richardson P."/>
        </authorList>
    </citation>
    <scope>NUCLEOTIDE SEQUENCE [LARGE SCALE GENOMIC DNA]</scope>
    <source>
        <strain>AU 1054</strain>
    </source>
</reference>
<name>RL3_BURO1</name>
<accession>Q1BRU8</accession>
<evidence type="ECO:0000255" key="1">
    <source>
        <dbReference type="HAMAP-Rule" id="MF_01325"/>
    </source>
</evidence>
<evidence type="ECO:0000256" key="2">
    <source>
        <dbReference type="SAM" id="MobiDB-lite"/>
    </source>
</evidence>
<evidence type="ECO:0000305" key="3"/>
<sequence>MMSLGLVGRKVGMTRIFTAEGDSIPVTVLDVSDNRVTQIKTVETDGYTAVQVAFGSRRASRVTKPLAGHLAKAGVEAGEILKEFRIDAAKAAELSNGAVVGADLFEVGQKVDVQGVSIGKGYAGTIKRYNFSSGRATHGNSRSHNVPGSIGMAQDPGRVFPGKRMTGHMGDVTVTVQNLEIARIDAERKLLLVKGAIPGAKGGKVFVTPAVKTKGAK</sequence>
<keyword id="KW-0488">Methylation</keyword>
<keyword id="KW-0687">Ribonucleoprotein</keyword>
<keyword id="KW-0689">Ribosomal protein</keyword>
<keyword id="KW-0694">RNA-binding</keyword>
<keyword id="KW-0699">rRNA-binding</keyword>
<organism>
    <name type="scientific">Burkholderia orbicola (strain AU 1054)</name>
    <dbReference type="NCBI Taxonomy" id="331271"/>
    <lineage>
        <taxon>Bacteria</taxon>
        <taxon>Pseudomonadati</taxon>
        <taxon>Pseudomonadota</taxon>
        <taxon>Betaproteobacteria</taxon>
        <taxon>Burkholderiales</taxon>
        <taxon>Burkholderiaceae</taxon>
        <taxon>Burkholderia</taxon>
        <taxon>Burkholderia cepacia complex</taxon>
        <taxon>Burkholderia orbicola</taxon>
    </lineage>
</organism>